<dbReference type="EMBL" id="CP000936">
    <property type="protein sequence ID" value="ACA37435.1"/>
    <property type="molecule type" value="Genomic_DNA"/>
</dbReference>
<dbReference type="RefSeq" id="WP_000351967.1">
    <property type="nucleotide sequence ID" value="NC_010380.1"/>
</dbReference>
<dbReference type="SMR" id="B1I9Y6"/>
<dbReference type="GeneID" id="93738863"/>
<dbReference type="KEGG" id="spv:SPH_2370"/>
<dbReference type="HOGENOM" id="CLU_108696_19_0_9"/>
<dbReference type="UniPathway" id="UPA00556"/>
<dbReference type="Proteomes" id="UP000002163">
    <property type="component" value="Chromosome"/>
</dbReference>
<dbReference type="GO" id="GO:0005737">
    <property type="term" value="C:cytoplasm"/>
    <property type="evidence" value="ECO:0007669"/>
    <property type="project" value="UniProtKB-SubCell"/>
</dbReference>
<dbReference type="GO" id="GO:0036370">
    <property type="term" value="F:D-alanyl carrier activity"/>
    <property type="evidence" value="ECO:0007669"/>
    <property type="project" value="UniProtKB-UniRule"/>
</dbReference>
<dbReference type="GO" id="GO:0071555">
    <property type="term" value="P:cell wall organization"/>
    <property type="evidence" value="ECO:0007669"/>
    <property type="project" value="UniProtKB-KW"/>
</dbReference>
<dbReference type="GO" id="GO:0070395">
    <property type="term" value="P:lipoteichoic acid biosynthetic process"/>
    <property type="evidence" value="ECO:0007669"/>
    <property type="project" value="UniProtKB-UniRule"/>
</dbReference>
<dbReference type="Gene3D" id="1.10.1200.10">
    <property type="entry name" value="ACP-like"/>
    <property type="match status" value="1"/>
</dbReference>
<dbReference type="HAMAP" id="MF_00565">
    <property type="entry name" value="DltC"/>
    <property type="match status" value="1"/>
</dbReference>
<dbReference type="InterPro" id="IPR036736">
    <property type="entry name" value="ACP-like_sf"/>
</dbReference>
<dbReference type="InterPro" id="IPR003230">
    <property type="entry name" value="DltC"/>
</dbReference>
<dbReference type="InterPro" id="IPR009081">
    <property type="entry name" value="PP-bd_ACP"/>
</dbReference>
<dbReference type="NCBIfam" id="TIGR01688">
    <property type="entry name" value="dltC"/>
    <property type="match status" value="1"/>
</dbReference>
<dbReference type="NCBIfam" id="NF003464">
    <property type="entry name" value="PRK05087.1"/>
    <property type="match status" value="1"/>
</dbReference>
<dbReference type="Pfam" id="PF00550">
    <property type="entry name" value="PP-binding"/>
    <property type="match status" value="1"/>
</dbReference>
<dbReference type="SUPFAM" id="SSF47336">
    <property type="entry name" value="ACP-like"/>
    <property type="match status" value="1"/>
</dbReference>
<dbReference type="PROSITE" id="PS50075">
    <property type="entry name" value="CARRIER"/>
    <property type="match status" value="1"/>
</dbReference>
<accession>B1I9Y6</accession>
<name>DLTC_STRPI</name>
<proteinExistence type="inferred from homology"/>
<sequence>MDIKSEVIEIIDELFMEDVSDMMDEDLFDAGVLDSMGTVELIVEIENRFDIRVPVTEFGRDDWNTANKIIAGIVELQNA</sequence>
<organism>
    <name type="scientific">Streptococcus pneumoniae (strain Hungary19A-6)</name>
    <dbReference type="NCBI Taxonomy" id="487214"/>
    <lineage>
        <taxon>Bacteria</taxon>
        <taxon>Bacillati</taxon>
        <taxon>Bacillota</taxon>
        <taxon>Bacilli</taxon>
        <taxon>Lactobacillales</taxon>
        <taxon>Streptococcaceae</taxon>
        <taxon>Streptococcus</taxon>
    </lineage>
</organism>
<protein>
    <recommendedName>
        <fullName evidence="1">D-alanyl carrier protein</fullName>
        <shortName evidence="1">DCP</shortName>
    </recommendedName>
    <alternativeName>
        <fullName evidence="1">D-alanine--poly(phosphoribitol) ligase subunit 2</fullName>
    </alternativeName>
</protein>
<comment type="function">
    <text evidence="1">Carrier protein involved in the D-alanylation of lipoteichoic acid (LTA). The loading of thioester-linked D-alanine onto DltC is catalyzed by D-alanine--D-alanyl carrier protein ligase DltA. The DltC-carried D-alanyl group is further transferred to cell membrane phosphatidylglycerol (PG) by forming an ester bond, probably catalyzed by DltD. D-alanylation of LTA plays an important role in modulating the properties of the cell wall in Gram-positive bacteria, influencing the net charge of the cell wall.</text>
</comment>
<comment type="pathway">
    <text evidence="1">Cell wall biogenesis; lipoteichoic acid biosynthesis.</text>
</comment>
<comment type="subcellular location">
    <subcellularLocation>
        <location evidence="1">Cytoplasm</location>
    </subcellularLocation>
</comment>
<comment type="PTM">
    <text evidence="1">4'-phosphopantetheine is transferred from CoA to a specific serine of apo-DCP.</text>
</comment>
<comment type="similarity">
    <text evidence="1">Belongs to the DltC family.</text>
</comment>
<gene>
    <name evidence="1" type="primary">dltC</name>
    <name type="ordered locus">SPH_2370</name>
</gene>
<keyword id="KW-0961">Cell wall biogenesis/degradation</keyword>
<keyword id="KW-0963">Cytoplasm</keyword>
<keyword id="KW-0596">Phosphopantetheine</keyword>
<keyword id="KW-0597">Phosphoprotein</keyword>
<evidence type="ECO:0000255" key="1">
    <source>
        <dbReference type="HAMAP-Rule" id="MF_00565"/>
    </source>
</evidence>
<feature type="chain" id="PRO_1000129403" description="D-alanyl carrier protein">
    <location>
        <begin position="1"/>
        <end position="79"/>
    </location>
</feature>
<feature type="domain" description="Carrier" evidence="1">
    <location>
        <begin position="1"/>
        <end position="77"/>
    </location>
</feature>
<feature type="modified residue" description="O-(pantetheine 4'-phosphoryl)serine" evidence="1">
    <location>
        <position position="35"/>
    </location>
</feature>
<reference key="1">
    <citation type="journal article" date="2010" name="Genome Biol.">
        <title>Structure and dynamics of the pan-genome of Streptococcus pneumoniae and closely related species.</title>
        <authorList>
            <person name="Donati C."/>
            <person name="Hiller N.L."/>
            <person name="Tettelin H."/>
            <person name="Muzzi A."/>
            <person name="Croucher N.J."/>
            <person name="Angiuoli S.V."/>
            <person name="Oggioni M."/>
            <person name="Dunning Hotopp J.C."/>
            <person name="Hu F.Z."/>
            <person name="Riley D.R."/>
            <person name="Covacci A."/>
            <person name="Mitchell T.J."/>
            <person name="Bentley S.D."/>
            <person name="Kilian M."/>
            <person name="Ehrlich G.D."/>
            <person name="Rappuoli R."/>
            <person name="Moxon E.R."/>
            <person name="Masignani V."/>
        </authorList>
    </citation>
    <scope>NUCLEOTIDE SEQUENCE [LARGE SCALE GENOMIC DNA]</scope>
    <source>
        <strain>Hungary19A-6</strain>
    </source>
</reference>